<proteinExistence type="inferred from homology"/>
<protein>
    <recommendedName>
        <fullName evidence="1">dTTP/UTP pyrophosphatase</fullName>
        <shortName evidence="1">dTTPase/UTPase</shortName>
        <ecNumber evidence="1">3.6.1.9</ecNumber>
    </recommendedName>
    <alternativeName>
        <fullName evidence="1">Nucleoside triphosphate pyrophosphatase</fullName>
    </alternativeName>
    <alternativeName>
        <fullName evidence="1">Nucleotide pyrophosphatase</fullName>
        <shortName evidence="1">Nucleotide PPase</shortName>
    </alternativeName>
</protein>
<accession>A5N6I4</accession>
<comment type="function">
    <text evidence="1">Nucleoside triphosphate pyrophosphatase that hydrolyzes dTTP and UTP. May have a dual role in cell division arrest and in preventing the incorporation of modified nucleotides into cellular nucleic acids.</text>
</comment>
<comment type="catalytic activity">
    <reaction evidence="1">
        <text>dTTP + H2O = dTMP + diphosphate + H(+)</text>
        <dbReference type="Rhea" id="RHEA:28534"/>
        <dbReference type="ChEBI" id="CHEBI:15377"/>
        <dbReference type="ChEBI" id="CHEBI:15378"/>
        <dbReference type="ChEBI" id="CHEBI:33019"/>
        <dbReference type="ChEBI" id="CHEBI:37568"/>
        <dbReference type="ChEBI" id="CHEBI:63528"/>
        <dbReference type="EC" id="3.6.1.9"/>
    </reaction>
</comment>
<comment type="catalytic activity">
    <reaction evidence="1">
        <text>UTP + H2O = UMP + diphosphate + H(+)</text>
        <dbReference type="Rhea" id="RHEA:29395"/>
        <dbReference type="ChEBI" id="CHEBI:15377"/>
        <dbReference type="ChEBI" id="CHEBI:15378"/>
        <dbReference type="ChEBI" id="CHEBI:33019"/>
        <dbReference type="ChEBI" id="CHEBI:46398"/>
        <dbReference type="ChEBI" id="CHEBI:57865"/>
        <dbReference type="EC" id="3.6.1.9"/>
    </reaction>
</comment>
<comment type="cofactor">
    <cofactor evidence="1">
        <name>a divalent metal cation</name>
        <dbReference type="ChEBI" id="CHEBI:60240"/>
    </cofactor>
</comment>
<comment type="subcellular location">
    <subcellularLocation>
        <location evidence="1">Cytoplasm</location>
    </subcellularLocation>
</comment>
<comment type="similarity">
    <text evidence="1">Belongs to the Maf family. YhdE subfamily.</text>
</comment>
<organism>
    <name type="scientific">Clostridium kluyveri (strain ATCC 8527 / DSM 555 / NBRC 12016 / NCIMB 10680 / K1)</name>
    <dbReference type="NCBI Taxonomy" id="431943"/>
    <lineage>
        <taxon>Bacteria</taxon>
        <taxon>Bacillati</taxon>
        <taxon>Bacillota</taxon>
        <taxon>Clostridia</taxon>
        <taxon>Eubacteriales</taxon>
        <taxon>Clostridiaceae</taxon>
        <taxon>Clostridium</taxon>
    </lineage>
</organism>
<name>NTPPA_CLOK5</name>
<dbReference type="EC" id="3.6.1.9" evidence="1"/>
<dbReference type="EMBL" id="CP000673">
    <property type="protein sequence ID" value="EDK32915.1"/>
    <property type="molecule type" value="Genomic_DNA"/>
</dbReference>
<dbReference type="RefSeq" id="WP_012101242.1">
    <property type="nucleotide sequence ID" value="NC_009706.1"/>
</dbReference>
<dbReference type="SMR" id="A5N6I4"/>
<dbReference type="STRING" id="431943.CKL_0864"/>
<dbReference type="KEGG" id="ckl:CKL_0864"/>
<dbReference type="eggNOG" id="COG0424">
    <property type="taxonomic scope" value="Bacteria"/>
</dbReference>
<dbReference type="HOGENOM" id="CLU_040416_0_0_9"/>
<dbReference type="Proteomes" id="UP000002411">
    <property type="component" value="Chromosome"/>
</dbReference>
<dbReference type="GO" id="GO:0005737">
    <property type="term" value="C:cytoplasm"/>
    <property type="evidence" value="ECO:0007669"/>
    <property type="project" value="UniProtKB-SubCell"/>
</dbReference>
<dbReference type="GO" id="GO:0036218">
    <property type="term" value="F:dTTP diphosphatase activity"/>
    <property type="evidence" value="ECO:0007669"/>
    <property type="project" value="RHEA"/>
</dbReference>
<dbReference type="GO" id="GO:0036221">
    <property type="term" value="F:UTP diphosphatase activity"/>
    <property type="evidence" value="ECO:0007669"/>
    <property type="project" value="RHEA"/>
</dbReference>
<dbReference type="GO" id="GO:0009117">
    <property type="term" value="P:nucleotide metabolic process"/>
    <property type="evidence" value="ECO:0007669"/>
    <property type="project" value="UniProtKB-KW"/>
</dbReference>
<dbReference type="CDD" id="cd00555">
    <property type="entry name" value="Maf"/>
    <property type="match status" value="1"/>
</dbReference>
<dbReference type="Gene3D" id="3.90.950.10">
    <property type="match status" value="1"/>
</dbReference>
<dbReference type="HAMAP" id="MF_00528">
    <property type="entry name" value="Maf"/>
    <property type="match status" value="1"/>
</dbReference>
<dbReference type="InterPro" id="IPR029001">
    <property type="entry name" value="ITPase-like_fam"/>
</dbReference>
<dbReference type="InterPro" id="IPR003697">
    <property type="entry name" value="Maf-like"/>
</dbReference>
<dbReference type="NCBIfam" id="TIGR00172">
    <property type="entry name" value="maf"/>
    <property type="match status" value="1"/>
</dbReference>
<dbReference type="NCBIfam" id="NF000867">
    <property type="entry name" value="PRK00078.1"/>
    <property type="match status" value="1"/>
</dbReference>
<dbReference type="PANTHER" id="PTHR43213">
    <property type="entry name" value="BIFUNCTIONAL DTTP/UTP PYROPHOSPHATASE/METHYLTRANSFERASE PROTEIN-RELATED"/>
    <property type="match status" value="1"/>
</dbReference>
<dbReference type="PANTHER" id="PTHR43213:SF5">
    <property type="entry name" value="BIFUNCTIONAL DTTP_UTP PYROPHOSPHATASE_METHYLTRANSFERASE PROTEIN-RELATED"/>
    <property type="match status" value="1"/>
</dbReference>
<dbReference type="Pfam" id="PF02545">
    <property type="entry name" value="Maf"/>
    <property type="match status" value="1"/>
</dbReference>
<dbReference type="PIRSF" id="PIRSF006305">
    <property type="entry name" value="Maf"/>
    <property type="match status" value="1"/>
</dbReference>
<dbReference type="SUPFAM" id="SSF52972">
    <property type="entry name" value="ITPase-like"/>
    <property type="match status" value="1"/>
</dbReference>
<feature type="chain" id="PRO_1000081712" description="dTTP/UTP pyrophosphatase">
    <location>
        <begin position="1"/>
        <end position="192"/>
    </location>
</feature>
<feature type="active site" description="Proton acceptor" evidence="1">
    <location>
        <position position="71"/>
    </location>
</feature>
<feature type="site" description="Important for substrate specificity" evidence="1">
    <location>
        <position position="11"/>
    </location>
</feature>
<feature type="site" description="Important for substrate specificity" evidence="1">
    <location>
        <position position="72"/>
    </location>
</feature>
<feature type="site" description="Important for substrate specificity" evidence="1">
    <location>
        <position position="156"/>
    </location>
</feature>
<gene>
    <name type="ordered locus">CKL_0864</name>
</gene>
<evidence type="ECO:0000255" key="1">
    <source>
        <dbReference type="HAMAP-Rule" id="MF_00528"/>
    </source>
</evidence>
<reference key="1">
    <citation type="journal article" date="2008" name="Proc. Natl. Acad. Sci. U.S.A.">
        <title>The genome of Clostridium kluyveri, a strict anaerobe with unique metabolic features.</title>
        <authorList>
            <person name="Seedorf H."/>
            <person name="Fricke W.F."/>
            <person name="Veith B."/>
            <person name="Brueggemann H."/>
            <person name="Liesegang H."/>
            <person name="Strittmatter A."/>
            <person name="Miethke M."/>
            <person name="Buckel W."/>
            <person name="Hinderberger J."/>
            <person name="Li F."/>
            <person name="Hagemeier C."/>
            <person name="Thauer R.K."/>
            <person name="Gottschalk G."/>
        </authorList>
    </citation>
    <scope>NUCLEOTIDE SEQUENCE [LARGE SCALE GENOMIC DNA]</scope>
    <source>
        <strain>ATCC 8527 / DSM 555 / NBRC 12016 / NCIMB 10680 / K1</strain>
    </source>
</reference>
<keyword id="KW-0963">Cytoplasm</keyword>
<keyword id="KW-0378">Hydrolase</keyword>
<keyword id="KW-0546">Nucleotide metabolism</keyword>
<keyword id="KW-1185">Reference proteome</keyword>
<sequence>MKIVLASASSRRRQLLSRLIENFQVVVSDFDEDSVVFQGRCESYVMKLAEGKAKDVCRKLTNESSIVIGCDTAVFLRGKVMGKPRDIQEAFHMLKALSGNEHDVYSGIAIMDKVLHKTVKSFVRTTVKFSEIDDRCIKNYLKKGEYKDKAGAYGIQGYGGVFVKEIHGCYYNVVGLPLNKLYNMLSGMGVNL</sequence>